<dbReference type="EMBL" id="CP001283">
    <property type="protein sequence ID" value="ACK88645.1"/>
    <property type="molecule type" value="Genomic_DNA"/>
</dbReference>
<dbReference type="RefSeq" id="WP_000559169.1">
    <property type="nucleotide sequence ID" value="NC_011773.1"/>
</dbReference>
<dbReference type="SMR" id="B7JJD6"/>
<dbReference type="GeneID" id="93011050"/>
<dbReference type="KEGG" id="bcu:BCAH820_0025"/>
<dbReference type="HOGENOM" id="CLU_060739_1_0_9"/>
<dbReference type="Proteomes" id="UP000001363">
    <property type="component" value="Chromosome"/>
</dbReference>
<dbReference type="GO" id="GO:0003677">
    <property type="term" value="F:DNA binding"/>
    <property type="evidence" value="ECO:0007669"/>
    <property type="project" value="UniProtKB-UniRule"/>
</dbReference>
<dbReference type="GO" id="GO:0008270">
    <property type="term" value="F:zinc ion binding"/>
    <property type="evidence" value="ECO:0007669"/>
    <property type="project" value="UniProtKB-KW"/>
</dbReference>
<dbReference type="GO" id="GO:0006310">
    <property type="term" value="P:DNA recombination"/>
    <property type="evidence" value="ECO:0007669"/>
    <property type="project" value="UniProtKB-UniRule"/>
</dbReference>
<dbReference type="GO" id="GO:0006281">
    <property type="term" value="P:DNA repair"/>
    <property type="evidence" value="ECO:0007669"/>
    <property type="project" value="UniProtKB-UniRule"/>
</dbReference>
<dbReference type="CDD" id="cd01025">
    <property type="entry name" value="TOPRIM_recR"/>
    <property type="match status" value="1"/>
</dbReference>
<dbReference type="Gene3D" id="3.30.60.80">
    <property type="match status" value="1"/>
</dbReference>
<dbReference type="Gene3D" id="3.40.1360.10">
    <property type="match status" value="1"/>
</dbReference>
<dbReference type="Gene3D" id="6.10.250.240">
    <property type="match status" value="1"/>
</dbReference>
<dbReference type="Gene3D" id="1.10.8.420">
    <property type="entry name" value="RecR Domain 1"/>
    <property type="match status" value="1"/>
</dbReference>
<dbReference type="HAMAP" id="MF_00017">
    <property type="entry name" value="RecR"/>
    <property type="match status" value="1"/>
</dbReference>
<dbReference type="InterPro" id="IPR000093">
    <property type="entry name" value="DNA_Rcmb_RecR"/>
</dbReference>
<dbReference type="InterPro" id="IPR023627">
    <property type="entry name" value="Rcmb_RecR"/>
</dbReference>
<dbReference type="InterPro" id="IPR015967">
    <property type="entry name" value="Rcmb_RecR_Znf"/>
</dbReference>
<dbReference type="InterPro" id="IPR006171">
    <property type="entry name" value="TOPRIM_dom"/>
</dbReference>
<dbReference type="InterPro" id="IPR034137">
    <property type="entry name" value="TOPRIM_RecR"/>
</dbReference>
<dbReference type="NCBIfam" id="TIGR00615">
    <property type="entry name" value="recR"/>
    <property type="match status" value="1"/>
</dbReference>
<dbReference type="PANTHER" id="PTHR30446">
    <property type="entry name" value="RECOMBINATION PROTEIN RECR"/>
    <property type="match status" value="1"/>
</dbReference>
<dbReference type="PANTHER" id="PTHR30446:SF0">
    <property type="entry name" value="RECOMBINATION PROTEIN RECR"/>
    <property type="match status" value="1"/>
</dbReference>
<dbReference type="Pfam" id="PF21175">
    <property type="entry name" value="RecR_C"/>
    <property type="match status" value="1"/>
</dbReference>
<dbReference type="Pfam" id="PF21176">
    <property type="entry name" value="RecR_HhH"/>
    <property type="match status" value="1"/>
</dbReference>
<dbReference type="Pfam" id="PF02132">
    <property type="entry name" value="RecR_ZnF"/>
    <property type="match status" value="1"/>
</dbReference>
<dbReference type="Pfam" id="PF13662">
    <property type="entry name" value="Toprim_4"/>
    <property type="match status" value="1"/>
</dbReference>
<dbReference type="SMART" id="SM00493">
    <property type="entry name" value="TOPRIM"/>
    <property type="match status" value="1"/>
</dbReference>
<dbReference type="SUPFAM" id="SSF111304">
    <property type="entry name" value="Recombination protein RecR"/>
    <property type="match status" value="1"/>
</dbReference>
<dbReference type="PROSITE" id="PS01300">
    <property type="entry name" value="RECR"/>
    <property type="match status" value="1"/>
</dbReference>
<dbReference type="PROSITE" id="PS50880">
    <property type="entry name" value="TOPRIM"/>
    <property type="match status" value="1"/>
</dbReference>
<feature type="chain" id="PRO_1000195361" description="Recombination protein RecR">
    <location>
        <begin position="1"/>
        <end position="198"/>
    </location>
</feature>
<feature type="domain" description="Toprim" evidence="1">
    <location>
        <begin position="80"/>
        <end position="175"/>
    </location>
</feature>
<feature type="zinc finger region" description="C4-type" evidence="1">
    <location>
        <begin position="57"/>
        <end position="72"/>
    </location>
</feature>
<keyword id="KW-0227">DNA damage</keyword>
<keyword id="KW-0233">DNA recombination</keyword>
<keyword id="KW-0234">DNA repair</keyword>
<keyword id="KW-0479">Metal-binding</keyword>
<keyword id="KW-0862">Zinc</keyword>
<keyword id="KW-0863">Zinc-finger</keyword>
<accession>B7JJD6</accession>
<gene>
    <name evidence="1" type="primary">recR</name>
    <name type="ordered locus">BCAH820_0025</name>
</gene>
<proteinExistence type="inferred from homology"/>
<reference key="1">
    <citation type="submission" date="2008-10" db="EMBL/GenBank/DDBJ databases">
        <title>Genome sequence of Bacillus cereus AH820.</title>
        <authorList>
            <person name="Dodson R.J."/>
            <person name="Durkin A.S."/>
            <person name="Rosovitz M.J."/>
            <person name="Rasko D.A."/>
            <person name="Hoffmaster A."/>
            <person name="Ravel J."/>
            <person name="Sutton G."/>
        </authorList>
    </citation>
    <scope>NUCLEOTIDE SEQUENCE [LARGE SCALE GENOMIC DNA]</scope>
    <source>
        <strain>AH820</strain>
    </source>
</reference>
<sequence>MHYPEPISKLIDSFMKLPGIGPKTAVRLAFFVLDMKEDDVLGFAKALVNAKRDLAYCSVCGHITDRDPCYICNDSHRDQSVVCVVQEPKDVIAMEKMKEYQGVYHVLRGAISPMEGIGPEDINIPQLLKRLHDETVQEVILATNPNIEGEATAMYISRLLKPTGIKVTRIAHGLPVGGDLEYADEVTLSKALEGRREV</sequence>
<comment type="function">
    <text evidence="1">May play a role in DNA repair. It seems to be involved in an RecBC-independent recombinational process of DNA repair. It may act with RecF and RecO.</text>
</comment>
<comment type="similarity">
    <text evidence="1">Belongs to the RecR family.</text>
</comment>
<evidence type="ECO:0000255" key="1">
    <source>
        <dbReference type="HAMAP-Rule" id="MF_00017"/>
    </source>
</evidence>
<organism>
    <name type="scientific">Bacillus cereus (strain AH820)</name>
    <dbReference type="NCBI Taxonomy" id="405535"/>
    <lineage>
        <taxon>Bacteria</taxon>
        <taxon>Bacillati</taxon>
        <taxon>Bacillota</taxon>
        <taxon>Bacilli</taxon>
        <taxon>Bacillales</taxon>
        <taxon>Bacillaceae</taxon>
        <taxon>Bacillus</taxon>
        <taxon>Bacillus cereus group</taxon>
    </lineage>
</organism>
<name>RECR_BACC0</name>
<protein>
    <recommendedName>
        <fullName evidence="1">Recombination protein RecR</fullName>
    </recommendedName>
</protein>